<reference key="1">
    <citation type="journal article" date="1998" name="DNA Res.">
        <title>Structural analysis of Arabidopsis thaliana chromosome 5. V. Sequence features of the regions of 1,381,565 bp covered by twenty one physically assigned P1 and TAC clones.</title>
        <authorList>
            <person name="Kaneko T."/>
            <person name="Kotani H."/>
            <person name="Nakamura Y."/>
            <person name="Sato S."/>
            <person name="Asamizu E."/>
            <person name="Miyajima N."/>
            <person name="Tabata S."/>
        </authorList>
    </citation>
    <scope>NUCLEOTIDE SEQUENCE [LARGE SCALE GENOMIC DNA]</scope>
    <source>
        <strain>cv. Columbia</strain>
    </source>
</reference>
<reference key="2">
    <citation type="journal article" date="2017" name="Plant J.">
        <title>Araport11: a complete reannotation of the Arabidopsis thaliana reference genome.</title>
        <authorList>
            <person name="Cheng C.Y."/>
            <person name="Krishnakumar V."/>
            <person name="Chan A.P."/>
            <person name="Thibaud-Nissen F."/>
            <person name="Schobel S."/>
            <person name="Town C.D."/>
        </authorList>
    </citation>
    <scope>GENOME REANNOTATION</scope>
    <source>
        <strain>cv. Columbia</strain>
    </source>
</reference>
<reference key="3">
    <citation type="journal article" date="2005" name="Planta">
        <title>Gene structure and molecular analysis of the laccase-like multicopper oxidase (LMCO) gene family in Arabidopsis thaliana.</title>
        <authorList>
            <person name="McCaig B.C."/>
            <person name="Meagher R.B."/>
            <person name="Dean J.F.D."/>
        </authorList>
    </citation>
    <scope>TISSUE SPECIFICITY</scope>
</reference>
<reference key="4">
    <citation type="journal article" date="2006" name="J. Exp. Bot.">
        <title>Mutant identification and characterization of the laccase gene family in Arabidopsis.</title>
        <authorList>
            <person name="Cai X."/>
            <person name="Davis E.J."/>
            <person name="Ballif J."/>
            <person name="Liang M."/>
            <person name="Bushman E."/>
            <person name="Haroldsen V."/>
            <person name="Torabinejad J."/>
            <person name="Wu Y."/>
        </authorList>
    </citation>
    <scope>TISSUE SPECIFICITY</scope>
</reference>
<dbReference type="EC" id="1.10.3.2"/>
<dbReference type="EMBL" id="AB010692">
    <property type="protein sequence ID" value="BAB09982.1"/>
    <property type="molecule type" value="Genomic_DNA"/>
</dbReference>
<dbReference type="EMBL" id="CP002688">
    <property type="protein sequence ID" value="AED90868.1"/>
    <property type="molecule type" value="Genomic_DNA"/>
</dbReference>
<dbReference type="RefSeq" id="NP_196158.1">
    <property type="nucleotide sequence ID" value="NM_120621.2"/>
</dbReference>
<dbReference type="SMR" id="Q9FLB5"/>
<dbReference type="FunCoup" id="Q9FLB5">
    <property type="interactions" value="23"/>
</dbReference>
<dbReference type="STRING" id="3702.Q9FLB5"/>
<dbReference type="GlyCosmos" id="Q9FLB5">
    <property type="glycosylation" value="9 sites, No reported glycans"/>
</dbReference>
<dbReference type="GlyGen" id="Q9FLB5">
    <property type="glycosylation" value="10 sites"/>
</dbReference>
<dbReference type="PaxDb" id="3702-AT5G05390.1"/>
<dbReference type="ProteomicsDB" id="250770"/>
<dbReference type="EnsemblPlants" id="AT5G05390.1">
    <property type="protein sequence ID" value="AT5G05390.1"/>
    <property type="gene ID" value="AT5G05390"/>
</dbReference>
<dbReference type="GeneID" id="830421"/>
<dbReference type="Gramene" id="AT5G05390.1">
    <property type="protein sequence ID" value="AT5G05390.1"/>
    <property type="gene ID" value="AT5G05390"/>
</dbReference>
<dbReference type="KEGG" id="ath:AT5G05390"/>
<dbReference type="Araport" id="AT5G05390"/>
<dbReference type="TAIR" id="AT5G05390">
    <property type="gene designation" value="LAC12"/>
</dbReference>
<dbReference type="eggNOG" id="KOG1263">
    <property type="taxonomic scope" value="Eukaryota"/>
</dbReference>
<dbReference type="HOGENOM" id="CLU_006504_6_3_1"/>
<dbReference type="InParanoid" id="Q9FLB5"/>
<dbReference type="OMA" id="GFWLYHC"/>
<dbReference type="PhylomeDB" id="Q9FLB5"/>
<dbReference type="BioCyc" id="ARA:AT5G05390-MONOMER"/>
<dbReference type="PRO" id="PR:Q9FLB5"/>
<dbReference type="Proteomes" id="UP000006548">
    <property type="component" value="Chromosome 5"/>
</dbReference>
<dbReference type="ExpressionAtlas" id="Q9FLB5">
    <property type="expression patterns" value="baseline and differential"/>
</dbReference>
<dbReference type="GO" id="GO:0048046">
    <property type="term" value="C:apoplast"/>
    <property type="evidence" value="ECO:0007669"/>
    <property type="project" value="UniProtKB-SubCell"/>
</dbReference>
<dbReference type="GO" id="GO:0005507">
    <property type="term" value="F:copper ion binding"/>
    <property type="evidence" value="ECO:0007669"/>
    <property type="project" value="InterPro"/>
</dbReference>
<dbReference type="GO" id="GO:0052716">
    <property type="term" value="F:hydroquinone:oxygen oxidoreductase activity"/>
    <property type="evidence" value="ECO:0007669"/>
    <property type="project" value="UniProtKB-EC"/>
</dbReference>
<dbReference type="GO" id="GO:0046274">
    <property type="term" value="P:lignin catabolic process"/>
    <property type="evidence" value="ECO:0007669"/>
    <property type="project" value="UniProtKB-KW"/>
</dbReference>
<dbReference type="GO" id="GO:1990641">
    <property type="term" value="P:response to iron ion starvation"/>
    <property type="evidence" value="ECO:0000270"/>
    <property type="project" value="TAIR"/>
</dbReference>
<dbReference type="CDD" id="cd13849">
    <property type="entry name" value="CuRO_1_LCC_plant"/>
    <property type="match status" value="1"/>
</dbReference>
<dbReference type="CDD" id="cd13875">
    <property type="entry name" value="CuRO_2_LCC_plant"/>
    <property type="match status" value="1"/>
</dbReference>
<dbReference type="CDD" id="cd13897">
    <property type="entry name" value="CuRO_3_LCC_plant"/>
    <property type="match status" value="1"/>
</dbReference>
<dbReference type="FunFam" id="2.60.40.420:FF:000049">
    <property type="entry name" value="Laccase"/>
    <property type="match status" value="1"/>
</dbReference>
<dbReference type="FunFam" id="2.60.40.420:FF:000062">
    <property type="entry name" value="Laccase"/>
    <property type="match status" value="1"/>
</dbReference>
<dbReference type="Gene3D" id="2.60.40.420">
    <property type="entry name" value="Cupredoxins - blue copper proteins"/>
    <property type="match status" value="3"/>
</dbReference>
<dbReference type="InterPro" id="IPR011707">
    <property type="entry name" value="Cu-oxidase-like_N"/>
</dbReference>
<dbReference type="InterPro" id="IPR001117">
    <property type="entry name" value="Cu-oxidase_2nd"/>
</dbReference>
<dbReference type="InterPro" id="IPR011706">
    <property type="entry name" value="Cu-oxidase_C"/>
</dbReference>
<dbReference type="InterPro" id="IPR045087">
    <property type="entry name" value="Cu-oxidase_fam"/>
</dbReference>
<dbReference type="InterPro" id="IPR033138">
    <property type="entry name" value="Cu_oxidase_CS"/>
</dbReference>
<dbReference type="InterPro" id="IPR002355">
    <property type="entry name" value="Cu_oxidase_Cu_BS"/>
</dbReference>
<dbReference type="InterPro" id="IPR008972">
    <property type="entry name" value="Cupredoxin"/>
</dbReference>
<dbReference type="InterPro" id="IPR034288">
    <property type="entry name" value="CuRO_1_LCC"/>
</dbReference>
<dbReference type="InterPro" id="IPR034285">
    <property type="entry name" value="CuRO_2_LCC"/>
</dbReference>
<dbReference type="InterPro" id="IPR034289">
    <property type="entry name" value="CuRO_3_LCC"/>
</dbReference>
<dbReference type="InterPro" id="IPR017761">
    <property type="entry name" value="Laccase"/>
</dbReference>
<dbReference type="NCBIfam" id="TIGR03389">
    <property type="entry name" value="laccase"/>
    <property type="match status" value="1"/>
</dbReference>
<dbReference type="PANTHER" id="PTHR11709:SF479">
    <property type="entry name" value="LACCASE-12"/>
    <property type="match status" value="1"/>
</dbReference>
<dbReference type="PANTHER" id="PTHR11709">
    <property type="entry name" value="MULTI-COPPER OXIDASE"/>
    <property type="match status" value="1"/>
</dbReference>
<dbReference type="Pfam" id="PF00394">
    <property type="entry name" value="Cu-oxidase"/>
    <property type="match status" value="1"/>
</dbReference>
<dbReference type="Pfam" id="PF07731">
    <property type="entry name" value="Cu-oxidase_2"/>
    <property type="match status" value="1"/>
</dbReference>
<dbReference type="Pfam" id="PF07732">
    <property type="entry name" value="Cu-oxidase_3"/>
    <property type="match status" value="1"/>
</dbReference>
<dbReference type="SUPFAM" id="SSF49503">
    <property type="entry name" value="Cupredoxins"/>
    <property type="match status" value="3"/>
</dbReference>
<dbReference type="PROSITE" id="PS00079">
    <property type="entry name" value="MULTICOPPER_OXIDASE1"/>
    <property type="match status" value="1"/>
</dbReference>
<dbReference type="PROSITE" id="PS00080">
    <property type="entry name" value="MULTICOPPER_OXIDASE2"/>
    <property type="match status" value="1"/>
</dbReference>
<organism>
    <name type="scientific">Arabidopsis thaliana</name>
    <name type="common">Mouse-ear cress</name>
    <dbReference type="NCBI Taxonomy" id="3702"/>
    <lineage>
        <taxon>Eukaryota</taxon>
        <taxon>Viridiplantae</taxon>
        <taxon>Streptophyta</taxon>
        <taxon>Embryophyta</taxon>
        <taxon>Tracheophyta</taxon>
        <taxon>Spermatophyta</taxon>
        <taxon>Magnoliopsida</taxon>
        <taxon>eudicotyledons</taxon>
        <taxon>Gunneridae</taxon>
        <taxon>Pentapetalae</taxon>
        <taxon>rosids</taxon>
        <taxon>malvids</taxon>
        <taxon>Brassicales</taxon>
        <taxon>Brassicaceae</taxon>
        <taxon>Camelineae</taxon>
        <taxon>Arabidopsis</taxon>
    </lineage>
</organism>
<sequence>MTTVHTFSILLFFCSLFSASLIIAKVQHHDFVIQETPVKRLCKTRNAITVNGMFPGPTLEVNNGDTLEVKVHNRARYNITIHWHGVRQIRTGWADGPEFVTQCPIRPGKSYTYRFTIQGQEGTLWWHAHSSWLRATVYGALIIHPTPGSSFPFPKPDRQTALMLGEWWNANPVDVINQATRTGAAPNISDAYTINGQPGDLYNCSTKETVVVPINSGETSLLRVINAALNQPLFFTVANHKLTVVGADASYLKPFTTKVLMLGPGQTTDVLLTADQPPKRYYIAARAYQSAQNAPFDNTTTTAILQYKKTTTTSKPIMPVLPAFNDTNTVTSFSRKFKSLRNVVVPKTIDDNLFFTIGLGLDNCPKKFPKSRCQGLNGTRFTASMNNVSFVLPSNFSLLQAHSNGIPGVFTTDFPSKPPVKFDYTGNNISRALFQPVKGTKLYKLKYGSRVQVVLQDTNIVTSENHPIHLHGYDFYIVGEGFGNFNPKKDTSKFNLVDPPLRNTVAVPVNGWAVIRFVADNPGVWLMHCHLDVHIKWGLAMAFLVDNGVGELETLEAPPHDLPIC</sequence>
<gene>
    <name type="primary">LAC12</name>
    <name type="ordered locus">At5g05390</name>
    <name type="ORF">K18I23.20</name>
</gene>
<keyword id="KW-0052">Apoplast</keyword>
<keyword id="KW-0186">Copper</keyword>
<keyword id="KW-0325">Glycoprotein</keyword>
<keyword id="KW-0439">Lignin degradation</keyword>
<keyword id="KW-0479">Metal-binding</keyword>
<keyword id="KW-0560">Oxidoreductase</keyword>
<keyword id="KW-1185">Reference proteome</keyword>
<keyword id="KW-0677">Repeat</keyword>
<keyword id="KW-0964">Secreted</keyword>
<keyword id="KW-0732">Signal</keyword>
<name>LAC12_ARATH</name>
<accession>Q9FLB5</accession>
<proteinExistence type="evidence at transcript level"/>
<protein>
    <recommendedName>
        <fullName>Laccase-12</fullName>
        <ecNumber>1.10.3.2</ecNumber>
    </recommendedName>
    <alternativeName>
        <fullName>Benzenediol:oxygen oxidoreductase 12</fullName>
    </alternativeName>
    <alternativeName>
        <fullName>Diphenol oxidase 12</fullName>
    </alternativeName>
    <alternativeName>
        <fullName>Urishiol oxidase 12</fullName>
    </alternativeName>
</protein>
<feature type="signal peptide" evidence="2">
    <location>
        <begin position="1"/>
        <end position="24"/>
    </location>
</feature>
<feature type="chain" id="PRO_0000283640" description="Laccase-12">
    <location>
        <begin position="25"/>
        <end position="565"/>
    </location>
</feature>
<feature type="domain" description="Plastocyanin-like 1">
    <location>
        <begin position="32"/>
        <end position="148"/>
    </location>
</feature>
<feature type="domain" description="Plastocyanin-like 2">
    <location>
        <begin position="158"/>
        <end position="310"/>
    </location>
</feature>
<feature type="domain" description="Plastocyanin-like 3">
    <location>
        <begin position="413"/>
        <end position="549"/>
    </location>
</feature>
<feature type="binding site" description="type 2 copper site" evidence="1">
    <location>
        <position position="82"/>
    </location>
    <ligand>
        <name>Cu cation</name>
        <dbReference type="ChEBI" id="CHEBI:23378"/>
        <label>1</label>
    </ligand>
</feature>
<feature type="binding site" description="type 3 copper site" evidence="1">
    <location>
        <position position="84"/>
    </location>
    <ligand>
        <name>Cu cation</name>
        <dbReference type="ChEBI" id="CHEBI:23378"/>
        <label>2</label>
    </ligand>
</feature>
<feature type="binding site" description="type 3 copper site" evidence="1">
    <location>
        <position position="127"/>
    </location>
    <ligand>
        <name>Cu cation</name>
        <dbReference type="ChEBI" id="CHEBI:23378"/>
        <label>2</label>
    </ligand>
</feature>
<feature type="binding site" description="type 3 copper site" evidence="1">
    <location>
        <position position="129"/>
    </location>
    <ligand>
        <name>Cu cation</name>
        <dbReference type="ChEBI" id="CHEBI:23378"/>
        <label>3</label>
    </ligand>
</feature>
<feature type="binding site" description="type 1 copper site" evidence="1">
    <location>
        <position position="466"/>
    </location>
    <ligand>
        <name>Cu cation</name>
        <dbReference type="ChEBI" id="CHEBI:23378"/>
        <label>4</label>
    </ligand>
</feature>
<feature type="binding site" description="type 2 copper site" evidence="1">
    <location>
        <position position="469"/>
    </location>
    <ligand>
        <name>Cu cation</name>
        <dbReference type="ChEBI" id="CHEBI:23378"/>
        <label>1</label>
    </ligand>
</feature>
<feature type="binding site" description="type 3 copper site" evidence="1">
    <location>
        <position position="471"/>
    </location>
    <ligand>
        <name>Cu cation</name>
        <dbReference type="ChEBI" id="CHEBI:23378"/>
        <label>3</label>
    </ligand>
</feature>
<feature type="binding site" description="type 3 copper site" evidence="1">
    <location>
        <position position="528"/>
    </location>
    <ligand>
        <name>Cu cation</name>
        <dbReference type="ChEBI" id="CHEBI:23378"/>
        <label>3</label>
    </ligand>
</feature>
<feature type="binding site" description="type 1 copper site" evidence="1">
    <location>
        <position position="529"/>
    </location>
    <ligand>
        <name>Cu cation</name>
        <dbReference type="ChEBI" id="CHEBI:23378"/>
        <label>4</label>
    </ligand>
</feature>
<feature type="binding site" description="type 3 copper site" evidence="1">
    <location>
        <position position="530"/>
    </location>
    <ligand>
        <name>Cu cation</name>
        <dbReference type="ChEBI" id="CHEBI:23378"/>
        <label>2</label>
    </ligand>
</feature>
<feature type="binding site" description="type 1 copper site" evidence="1">
    <location>
        <position position="534"/>
    </location>
    <ligand>
        <name>Cu cation</name>
        <dbReference type="ChEBI" id="CHEBI:23378"/>
        <label>4</label>
    </ligand>
</feature>
<feature type="glycosylation site" description="N-linked (GlcNAc...) asparagine" evidence="2">
    <location>
        <position position="78"/>
    </location>
</feature>
<feature type="glycosylation site" description="N-linked (GlcNAc...) asparagine" evidence="2">
    <location>
        <position position="187"/>
    </location>
</feature>
<feature type="glycosylation site" description="N-linked (GlcNAc...) asparagine" evidence="2">
    <location>
        <position position="203"/>
    </location>
</feature>
<feature type="glycosylation site" description="N-linked (GlcNAc...) asparagine" evidence="2">
    <location>
        <position position="298"/>
    </location>
</feature>
<feature type="glycosylation site" description="N-linked (GlcNAc...) asparagine" evidence="2">
    <location>
        <position position="325"/>
    </location>
</feature>
<feature type="glycosylation site" description="N-linked (GlcNAc...) asparagine" evidence="2">
    <location>
        <position position="377"/>
    </location>
</feature>
<feature type="glycosylation site" description="N-linked (GlcNAc...) asparagine" evidence="2">
    <location>
        <position position="387"/>
    </location>
</feature>
<feature type="glycosylation site" description="N-linked (GlcNAc...) asparagine" evidence="2">
    <location>
        <position position="395"/>
    </location>
</feature>
<feature type="glycosylation site" description="N-linked (GlcNAc...) asparagine" evidence="2">
    <location>
        <position position="428"/>
    </location>
</feature>
<evidence type="ECO:0000250" key="1"/>
<evidence type="ECO:0000255" key="2"/>
<evidence type="ECO:0000269" key="3">
    <source>
    </source>
</evidence>
<evidence type="ECO:0000269" key="4">
    <source>
    </source>
</evidence>
<evidence type="ECO:0000305" key="5"/>
<comment type="function">
    <text evidence="1">Lignin degradation and detoxification of lignin-derived products.</text>
</comment>
<comment type="catalytic activity">
    <reaction>
        <text>4 hydroquinone + O2 = 4 benzosemiquinone + 2 H2O</text>
        <dbReference type="Rhea" id="RHEA:11276"/>
        <dbReference type="ChEBI" id="CHEBI:15377"/>
        <dbReference type="ChEBI" id="CHEBI:15379"/>
        <dbReference type="ChEBI" id="CHEBI:17594"/>
        <dbReference type="ChEBI" id="CHEBI:17977"/>
        <dbReference type="EC" id="1.10.3.2"/>
    </reaction>
</comment>
<comment type="cofactor">
    <cofactor evidence="1">
        <name>Cu cation</name>
        <dbReference type="ChEBI" id="CHEBI:23378"/>
    </cofactor>
    <text evidence="1">Binds 4 Cu cations per monomer.</text>
</comment>
<comment type="subcellular location">
    <subcellularLocation>
        <location evidence="5">Secreted</location>
        <location evidence="5">Extracellular space</location>
        <location evidence="5">Apoplast</location>
    </subcellularLocation>
</comment>
<comment type="tissue specificity">
    <text evidence="3 4">Predominantly expressed in the inflorescence stem.</text>
</comment>
<comment type="similarity">
    <text evidence="5">Belongs to the multicopper oxidase family.</text>
</comment>